<organism>
    <name type="scientific">Canis lupus familiaris</name>
    <name type="common">Dog</name>
    <name type="synonym">Canis familiaris</name>
    <dbReference type="NCBI Taxonomy" id="9615"/>
    <lineage>
        <taxon>Eukaryota</taxon>
        <taxon>Metazoa</taxon>
        <taxon>Chordata</taxon>
        <taxon>Craniata</taxon>
        <taxon>Vertebrata</taxon>
        <taxon>Euteleostomi</taxon>
        <taxon>Mammalia</taxon>
        <taxon>Eutheria</taxon>
        <taxon>Laurasiatheria</taxon>
        <taxon>Carnivora</taxon>
        <taxon>Caniformia</taxon>
        <taxon>Canidae</taxon>
        <taxon>Canis</taxon>
    </lineage>
</organism>
<proteinExistence type="evidence at transcript level"/>
<sequence length="573" mass="64347">MHALTGLSLVSLLSFGYLSWDWAKPSLVADGPGEPGLEQPSAPPPQPPHIIFILTDDQGYHDVGYHGSDIETPTLDRLAAEGVKLENYYIQPICTPSRSQLLTGRYQIHTGLQHSIIRPRQPNCLPLDQVTLPQKLQEAGYSTHMVGKWHLGFYRKECLPTRRGFDTFLGSLTGNVDYYTYDNCDGPGVCGFDLHEGENVAWGLSGQYSTMLYAQRVSHILASHSPRRPLFLYVAFQAVHTPLQSPREYLYRYRTMGNVARRKYAAMVTCMDEAVRNITSALKRYGFYNNSVIIFSSDNGGQTFSGGSNWPLRGRKGTYWEGGVRGLGFVHSPLLKRKRRTSRALVHITDWYPTLVGLAGGTASAADGLDGYDVWPAISEGRASPRTEILHNIDPLYNHARHGSLEAGFGIWNTAVQAAIRVGEWKLLTGDPGYGDWIPPQTLAAFPGSWWNLERMASARQAVWLFNISADPYEREDLAGQRPDVVRALLARLVDYNRTAIPVRYPAENPRAHPDFNGGAWGPWASDEEEEEEEEEAGRARSFSRGRRKKKCKICKLRSFFRKLNTRLMSQRI</sequence>
<accession>Q32KH7</accession>
<dbReference type="EC" id="3.1.6.-"/>
<dbReference type="EMBL" id="AAEX02012119">
    <property type="status" value="NOT_ANNOTATED_CDS"/>
    <property type="molecule type" value="Genomic_DNA"/>
</dbReference>
<dbReference type="EMBL" id="BN000760">
    <property type="protein sequence ID" value="CAI85006.1"/>
    <property type="status" value="ALT_INIT"/>
    <property type="molecule type" value="mRNA"/>
</dbReference>
<dbReference type="RefSeq" id="NP_001041583.1">
    <property type="nucleotide sequence ID" value="NM_001048118.1"/>
</dbReference>
<dbReference type="SMR" id="Q32KH7"/>
<dbReference type="FunCoup" id="Q32KH7">
    <property type="interactions" value="2"/>
</dbReference>
<dbReference type="STRING" id="9615.ENSCAFP00000026778"/>
<dbReference type="GlyCosmos" id="Q32KH7">
    <property type="glycosylation" value="4 sites, No reported glycans"/>
</dbReference>
<dbReference type="PaxDb" id="9612-ENSCAFP00000026778"/>
<dbReference type="GeneID" id="489186"/>
<dbReference type="KEGG" id="cfa:489186"/>
<dbReference type="CTD" id="340075"/>
<dbReference type="eggNOG" id="KOG3867">
    <property type="taxonomic scope" value="Eukaryota"/>
</dbReference>
<dbReference type="InParanoid" id="Q32KH7"/>
<dbReference type="OrthoDB" id="103349at2759"/>
<dbReference type="TreeFam" id="TF314186"/>
<dbReference type="Proteomes" id="UP000002254">
    <property type="component" value="Unplaced"/>
</dbReference>
<dbReference type="Proteomes" id="UP000694429">
    <property type="component" value="Unplaced"/>
</dbReference>
<dbReference type="Proteomes" id="UP000694542">
    <property type="component" value="Unplaced"/>
</dbReference>
<dbReference type="Proteomes" id="UP000805418">
    <property type="component" value="Unplaced"/>
</dbReference>
<dbReference type="GO" id="GO:0005783">
    <property type="term" value="C:endoplasmic reticulum"/>
    <property type="evidence" value="ECO:0007669"/>
    <property type="project" value="UniProtKB-SubCell"/>
</dbReference>
<dbReference type="GO" id="GO:0005576">
    <property type="term" value="C:extracellular region"/>
    <property type="evidence" value="ECO:0007669"/>
    <property type="project" value="UniProtKB-SubCell"/>
</dbReference>
<dbReference type="GO" id="GO:0046872">
    <property type="term" value="F:metal ion binding"/>
    <property type="evidence" value="ECO:0007669"/>
    <property type="project" value="UniProtKB-KW"/>
</dbReference>
<dbReference type="GO" id="GO:0008484">
    <property type="term" value="F:sulfuric ester hydrolase activity"/>
    <property type="evidence" value="ECO:0007669"/>
    <property type="project" value="InterPro"/>
</dbReference>
<dbReference type="CDD" id="cd16029">
    <property type="entry name" value="4-S"/>
    <property type="match status" value="1"/>
</dbReference>
<dbReference type="FunFam" id="3.30.1120.10:FF:000002">
    <property type="entry name" value="Arylsulfatase family member J"/>
    <property type="match status" value="1"/>
</dbReference>
<dbReference type="FunFam" id="3.40.720.10:FF:000007">
    <property type="entry name" value="Arylsulfatase family, member J"/>
    <property type="match status" value="1"/>
</dbReference>
<dbReference type="Gene3D" id="3.30.1120.10">
    <property type="match status" value="1"/>
</dbReference>
<dbReference type="Gene3D" id="3.40.720.10">
    <property type="entry name" value="Alkaline Phosphatase, subunit A"/>
    <property type="match status" value="1"/>
</dbReference>
<dbReference type="InterPro" id="IPR017850">
    <property type="entry name" value="Alkaline_phosphatase_core_sf"/>
</dbReference>
<dbReference type="InterPro" id="IPR047115">
    <property type="entry name" value="ARSB"/>
</dbReference>
<dbReference type="InterPro" id="IPR024607">
    <property type="entry name" value="Sulfatase_CS"/>
</dbReference>
<dbReference type="InterPro" id="IPR000917">
    <property type="entry name" value="Sulfatase_N"/>
</dbReference>
<dbReference type="PANTHER" id="PTHR10342">
    <property type="entry name" value="ARYLSULFATASE"/>
    <property type="match status" value="1"/>
</dbReference>
<dbReference type="PANTHER" id="PTHR10342:SF68">
    <property type="entry name" value="ARYLSULFATASE I"/>
    <property type="match status" value="1"/>
</dbReference>
<dbReference type="Pfam" id="PF00884">
    <property type="entry name" value="Sulfatase"/>
    <property type="match status" value="1"/>
</dbReference>
<dbReference type="SUPFAM" id="SSF53649">
    <property type="entry name" value="Alkaline phosphatase-like"/>
    <property type="match status" value="1"/>
</dbReference>
<dbReference type="PROSITE" id="PS00523">
    <property type="entry name" value="SULFATASE_1"/>
    <property type="match status" value="1"/>
</dbReference>
<dbReference type="PROSITE" id="PS00149">
    <property type="entry name" value="SULFATASE_2"/>
    <property type="match status" value="1"/>
</dbReference>
<comment type="function">
    <text evidence="2">Displays arylsulfatase activity at neutral pH, when co-expressed with SUMF1; arylsulfatase activity is measured in the secretion medium of retinal cell line, but no activity is recorded when measured in cell extracts.</text>
</comment>
<comment type="cofactor">
    <cofactor evidence="1">
        <name>Ca(2+)</name>
        <dbReference type="ChEBI" id="CHEBI:29108"/>
    </cofactor>
    <text evidence="1">Binds 1 Ca(2+) ion per subunit.</text>
</comment>
<comment type="subcellular location">
    <subcellularLocation>
        <location evidence="2">Secreted</location>
    </subcellularLocation>
    <subcellularLocation>
        <location evidence="2">Endoplasmic reticulum</location>
    </subcellularLocation>
    <text evidence="2">Localized in the intracellular granular structures.</text>
</comment>
<comment type="PTM">
    <text evidence="2">The oxidation of Cys-94 residue to 3-oxoalanine (also known as C(alpha)-formylglycine) by SUMF1/Sulfatase-modifying factor 1, seems critical for catalytic activity.</text>
</comment>
<comment type="similarity">
    <text evidence="5">Belongs to the sulfatase family.</text>
</comment>
<comment type="sequence caution" evidence="5">
    <conflict type="erroneous initiation">
        <sequence resource="EMBL-CDS" id="CAI85006"/>
    </conflict>
</comment>
<name>ARSI_CANLF</name>
<evidence type="ECO:0000250" key="1">
    <source>
        <dbReference type="UniProtKB" id="P15289"/>
    </source>
</evidence>
<evidence type="ECO:0000250" key="2">
    <source>
        <dbReference type="UniProtKB" id="Q5FYB1"/>
    </source>
</evidence>
<evidence type="ECO:0000255" key="3"/>
<evidence type="ECO:0000256" key="4">
    <source>
        <dbReference type="SAM" id="MobiDB-lite"/>
    </source>
</evidence>
<evidence type="ECO:0000305" key="5"/>
<reference key="1">
    <citation type="journal article" date="2005" name="Nature">
        <title>Genome sequence, comparative analysis and haplotype structure of the domestic dog.</title>
        <authorList>
            <person name="Lindblad-Toh K."/>
            <person name="Wade C.M."/>
            <person name="Mikkelsen T.S."/>
            <person name="Karlsson E.K."/>
            <person name="Jaffe D.B."/>
            <person name="Kamal M."/>
            <person name="Clamp M."/>
            <person name="Chang J.L."/>
            <person name="Kulbokas E.J. III"/>
            <person name="Zody M.C."/>
            <person name="Mauceli E."/>
            <person name="Xie X."/>
            <person name="Breen M."/>
            <person name="Wayne R.K."/>
            <person name="Ostrander E.A."/>
            <person name="Ponting C.P."/>
            <person name="Galibert F."/>
            <person name="Smith D.R."/>
            <person name="deJong P.J."/>
            <person name="Kirkness E.F."/>
            <person name="Alvarez P."/>
            <person name="Biagi T."/>
            <person name="Brockman W."/>
            <person name="Butler J."/>
            <person name="Chin C.-W."/>
            <person name="Cook A."/>
            <person name="Cuff J."/>
            <person name="Daly M.J."/>
            <person name="DeCaprio D."/>
            <person name="Gnerre S."/>
            <person name="Grabherr M."/>
            <person name="Kellis M."/>
            <person name="Kleber M."/>
            <person name="Bardeleben C."/>
            <person name="Goodstadt L."/>
            <person name="Heger A."/>
            <person name="Hitte C."/>
            <person name="Kim L."/>
            <person name="Koepfli K.-P."/>
            <person name="Parker H.G."/>
            <person name="Pollinger J.P."/>
            <person name="Searle S.M.J."/>
            <person name="Sutter N.B."/>
            <person name="Thomas R."/>
            <person name="Webber C."/>
            <person name="Baldwin J."/>
            <person name="Abebe A."/>
            <person name="Abouelleil A."/>
            <person name="Aftuck L."/>
            <person name="Ait-Zahra M."/>
            <person name="Aldredge T."/>
            <person name="Allen N."/>
            <person name="An P."/>
            <person name="Anderson S."/>
            <person name="Antoine C."/>
            <person name="Arachchi H."/>
            <person name="Aslam A."/>
            <person name="Ayotte L."/>
            <person name="Bachantsang P."/>
            <person name="Barry A."/>
            <person name="Bayul T."/>
            <person name="Benamara M."/>
            <person name="Berlin A."/>
            <person name="Bessette D."/>
            <person name="Blitshteyn B."/>
            <person name="Bloom T."/>
            <person name="Blye J."/>
            <person name="Boguslavskiy L."/>
            <person name="Bonnet C."/>
            <person name="Boukhgalter B."/>
            <person name="Brown A."/>
            <person name="Cahill P."/>
            <person name="Calixte N."/>
            <person name="Camarata J."/>
            <person name="Cheshatsang Y."/>
            <person name="Chu J."/>
            <person name="Citroen M."/>
            <person name="Collymore A."/>
            <person name="Cooke P."/>
            <person name="Dawoe T."/>
            <person name="Daza R."/>
            <person name="Decktor K."/>
            <person name="DeGray S."/>
            <person name="Dhargay N."/>
            <person name="Dooley K."/>
            <person name="Dooley K."/>
            <person name="Dorje P."/>
            <person name="Dorjee K."/>
            <person name="Dorris L."/>
            <person name="Duffey N."/>
            <person name="Dupes A."/>
            <person name="Egbiremolen O."/>
            <person name="Elong R."/>
            <person name="Falk J."/>
            <person name="Farina A."/>
            <person name="Faro S."/>
            <person name="Ferguson D."/>
            <person name="Ferreira P."/>
            <person name="Fisher S."/>
            <person name="FitzGerald M."/>
            <person name="Foley K."/>
            <person name="Foley C."/>
            <person name="Franke A."/>
            <person name="Friedrich D."/>
            <person name="Gage D."/>
            <person name="Garber M."/>
            <person name="Gearin G."/>
            <person name="Giannoukos G."/>
            <person name="Goode T."/>
            <person name="Goyette A."/>
            <person name="Graham J."/>
            <person name="Grandbois E."/>
            <person name="Gyaltsen K."/>
            <person name="Hafez N."/>
            <person name="Hagopian D."/>
            <person name="Hagos B."/>
            <person name="Hall J."/>
            <person name="Healy C."/>
            <person name="Hegarty R."/>
            <person name="Honan T."/>
            <person name="Horn A."/>
            <person name="Houde N."/>
            <person name="Hughes L."/>
            <person name="Hunnicutt L."/>
            <person name="Husby M."/>
            <person name="Jester B."/>
            <person name="Jones C."/>
            <person name="Kamat A."/>
            <person name="Kanga B."/>
            <person name="Kells C."/>
            <person name="Khazanovich D."/>
            <person name="Kieu A.C."/>
            <person name="Kisner P."/>
            <person name="Kumar M."/>
            <person name="Lance K."/>
            <person name="Landers T."/>
            <person name="Lara M."/>
            <person name="Lee W."/>
            <person name="Leger J.-P."/>
            <person name="Lennon N."/>
            <person name="Leuper L."/>
            <person name="LeVine S."/>
            <person name="Liu J."/>
            <person name="Liu X."/>
            <person name="Lokyitsang Y."/>
            <person name="Lokyitsang T."/>
            <person name="Lui A."/>
            <person name="Macdonald J."/>
            <person name="Major J."/>
            <person name="Marabella R."/>
            <person name="Maru K."/>
            <person name="Matthews C."/>
            <person name="McDonough S."/>
            <person name="Mehta T."/>
            <person name="Meldrim J."/>
            <person name="Melnikov A."/>
            <person name="Meneus L."/>
            <person name="Mihalev A."/>
            <person name="Mihova T."/>
            <person name="Miller K."/>
            <person name="Mittelman R."/>
            <person name="Mlenga V."/>
            <person name="Mulrain L."/>
            <person name="Munson G."/>
            <person name="Navidi A."/>
            <person name="Naylor J."/>
            <person name="Nguyen T."/>
            <person name="Nguyen N."/>
            <person name="Nguyen C."/>
            <person name="Nguyen T."/>
            <person name="Nicol R."/>
            <person name="Norbu N."/>
            <person name="Norbu C."/>
            <person name="Novod N."/>
            <person name="Nyima T."/>
            <person name="Olandt P."/>
            <person name="O'Neill B."/>
            <person name="O'Neill K."/>
            <person name="Osman S."/>
            <person name="Oyono L."/>
            <person name="Patti C."/>
            <person name="Perrin D."/>
            <person name="Phunkhang P."/>
            <person name="Pierre F."/>
            <person name="Priest M."/>
            <person name="Rachupka A."/>
            <person name="Raghuraman S."/>
            <person name="Rameau R."/>
            <person name="Ray V."/>
            <person name="Raymond C."/>
            <person name="Rege F."/>
            <person name="Rise C."/>
            <person name="Rogers J."/>
            <person name="Rogov P."/>
            <person name="Sahalie J."/>
            <person name="Settipalli S."/>
            <person name="Sharpe T."/>
            <person name="Shea T."/>
            <person name="Sheehan M."/>
            <person name="Sherpa N."/>
            <person name="Shi J."/>
            <person name="Shih D."/>
            <person name="Sloan J."/>
            <person name="Smith C."/>
            <person name="Sparrow T."/>
            <person name="Stalker J."/>
            <person name="Stange-Thomann N."/>
            <person name="Stavropoulos S."/>
            <person name="Stone C."/>
            <person name="Stone S."/>
            <person name="Sykes S."/>
            <person name="Tchuinga P."/>
            <person name="Tenzing P."/>
            <person name="Tesfaye S."/>
            <person name="Thoulutsang D."/>
            <person name="Thoulutsang Y."/>
            <person name="Topham K."/>
            <person name="Topping I."/>
            <person name="Tsamla T."/>
            <person name="Vassiliev H."/>
            <person name="Venkataraman V."/>
            <person name="Vo A."/>
            <person name="Wangchuk T."/>
            <person name="Wangdi T."/>
            <person name="Weiand M."/>
            <person name="Wilkinson J."/>
            <person name="Wilson A."/>
            <person name="Yadav S."/>
            <person name="Yang S."/>
            <person name="Yang X."/>
            <person name="Young G."/>
            <person name="Yu Q."/>
            <person name="Zainoun J."/>
            <person name="Zembek L."/>
            <person name="Zimmer A."/>
            <person name="Lander E.S."/>
        </authorList>
    </citation>
    <scope>NUCLEOTIDE SEQUENCE [LARGE SCALE GENOMIC DNA]</scope>
    <source>
        <strain>Boxer</strain>
    </source>
</reference>
<reference key="2">
    <citation type="journal article" date="2005" name="Hum. Mol. Genet.">
        <title>Sulfatases and sulfatase modifying factors: an exclusive and promiscuous relationship.</title>
        <authorList>
            <person name="Sardiello M."/>
            <person name="Annunziata I."/>
            <person name="Roma G."/>
            <person name="Ballabio A."/>
        </authorList>
    </citation>
    <scope>IDENTIFICATION</scope>
</reference>
<feature type="signal peptide" evidence="3">
    <location>
        <begin position="1"/>
        <end position="23"/>
    </location>
</feature>
<feature type="chain" id="PRO_0000356283" description="Arylsulfatase I">
    <location>
        <begin position="24"/>
        <end position="573"/>
    </location>
</feature>
<feature type="region of interest" description="Disordered" evidence="4">
    <location>
        <begin position="516"/>
        <end position="550"/>
    </location>
</feature>
<feature type="compositionally biased region" description="Acidic residues" evidence="4">
    <location>
        <begin position="526"/>
        <end position="536"/>
    </location>
</feature>
<feature type="active site" description="Nucleophile" evidence="1">
    <location>
        <position position="94"/>
    </location>
</feature>
<feature type="active site" evidence="1">
    <location>
        <position position="150"/>
    </location>
</feature>
<feature type="binding site" evidence="1">
    <location>
        <position position="56"/>
    </location>
    <ligand>
        <name>Ca(2+)</name>
        <dbReference type="ChEBI" id="CHEBI:29108"/>
    </ligand>
</feature>
<feature type="binding site" evidence="1">
    <location>
        <position position="57"/>
    </location>
    <ligand>
        <name>Ca(2+)</name>
        <dbReference type="ChEBI" id="CHEBI:29108"/>
    </ligand>
</feature>
<feature type="binding site" description="via 3-oxoalanine" evidence="1">
    <location>
        <position position="94"/>
    </location>
    <ligand>
        <name>Ca(2+)</name>
        <dbReference type="ChEBI" id="CHEBI:29108"/>
    </ligand>
</feature>
<feature type="binding site" evidence="1">
    <location>
        <position position="148"/>
    </location>
    <ligand>
        <name>substrate</name>
    </ligand>
</feature>
<feature type="binding site" evidence="1">
    <location>
        <position position="240"/>
    </location>
    <ligand>
        <name>substrate</name>
    </ligand>
</feature>
<feature type="binding site" evidence="1">
    <location>
        <position position="298"/>
    </location>
    <ligand>
        <name>Ca(2+)</name>
        <dbReference type="ChEBI" id="CHEBI:29108"/>
    </ligand>
</feature>
<feature type="binding site" evidence="1">
    <location>
        <position position="299"/>
    </location>
    <ligand>
        <name>Ca(2+)</name>
        <dbReference type="ChEBI" id="CHEBI:29108"/>
    </ligand>
</feature>
<feature type="binding site" evidence="1">
    <location>
        <position position="316"/>
    </location>
    <ligand>
        <name>substrate</name>
    </ligand>
</feature>
<feature type="modified residue" description="3-oxoalanine (Cys)" evidence="2">
    <location>
        <position position="94"/>
    </location>
</feature>
<feature type="glycosylation site" description="N-linked (GlcNAc...) asparagine" evidence="3">
    <location>
        <position position="277"/>
    </location>
</feature>
<feature type="glycosylation site" description="N-linked (GlcNAc...) asparagine" evidence="3">
    <location>
        <position position="289"/>
    </location>
</feature>
<feature type="glycosylation site" description="N-linked (GlcNAc...) asparagine" evidence="3">
    <location>
        <position position="467"/>
    </location>
</feature>
<feature type="glycosylation site" description="N-linked (GlcNAc...) asparagine" evidence="3">
    <location>
        <position position="497"/>
    </location>
</feature>
<gene>
    <name type="primary">ARSI</name>
</gene>
<protein>
    <recommendedName>
        <fullName>Arylsulfatase I</fullName>
        <shortName>ASI</shortName>
        <ecNumber>3.1.6.-</ecNumber>
    </recommendedName>
</protein>
<keyword id="KW-0106">Calcium</keyword>
<keyword id="KW-0256">Endoplasmic reticulum</keyword>
<keyword id="KW-0325">Glycoprotein</keyword>
<keyword id="KW-0378">Hydrolase</keyword>
<keyword id="KW-0479">Metal-binding</keyword>
<keyword id="KW-1185">Reference proteome</keyword>
<keyword id="KW-0964">Secreted</keyword>
<keyword id="KW-0732">Signal</keyword>